<dbReference type="EC" id="3.4.24.84" evidence="13 14"/>
<dbReference type="EMBL" id="AY029194">
    <property type="protein sequence ID" value="AAK38172.1"/>
    <property type="molecule type" value="mRNA"/>
</dbReference>
<dbReference type="EMBL" id="AJ487544">
    <property type="protein sequence ID" value="CAD31792.1"/>
    <property type="molecule type" value="mRNA"/>
</dbReference>
<dbReference type="EMBL" id="AK083566">
    <property type="protein sequence ID" value="BAC38953.1"/>
    <property type="molecule type" value="mRNA"/>
</dbReference>
<dbReference type="CCDS" id="CCDS18600.1"/>
<dbReference type="RefSeq" id="NP_766288.1">
    <property type="nucleotide sequence ID" value="NM_172700.3"/>
</dbReference>
<dbReference type="SMR" id="Q80W54"/>
<dbReference type="FunCoup" id="Q80W54">
    <property type="interactions" value="2528"/>
</dbReference>
<dbReference type="STRING" id="10090.ENSMUSP00000053900"/>
<dbReference type="BindingDB" id="Q80W54"/>
<dbReference type="ChEMBL" id="CHEMBL1075286"/>
<dbReference type="DrugCentral" id="Q80W54"/>
<dbReference type="MEROPS" id="M48.003"/>
<dbReference type="iPTMnet" id="Q80W54"/>
<dbReference type="PhosphoSitePlus" id="Q80W54"/>
<dbReference type="SwissPalm" id="Q80W54"/>
<dbReference type="jPOST" id="Q80W54"/>
<dbReference type="PaxDb" id="10090-ENSMUSP00000053900"/>
<dbReference type="ProteomicsDB" id="271852"/>
<dbReference type="Pumba" id="Q80W54"/>
<dbReference type="Antibodypedia" id="1711">
    <property type="antibodies" value="426 antibodies from 31 providers"/>
</dbReference>
<dbReference type="DNASU" id="230709"/>
<dbReference type="Ensembl" id="ENSMUST00000058754.9">
    <property type="protein sequence ID" value="ENSMUSP00000053900.3"/>
    <property type="gene ID" value="ENSMUSG00000043207.11"/>
</dbReference>
<dbReference type="GeneID" id="230709"/>
<dbReference type="KEGG" id="mmu:230709"/>
<dbReference type="UCSC" id="uc008uny.1">
    <property type="organism name" value="mouse"/>
</dbReference>
<dbReference type="AGR" id="MGI:1890508"/>
<dbReference type="CTD" id="10269"/>
<dbReference type="MGI" id="MGI:1890508">
    <property type="gene designation" value="Zmpste24"/>
</dbReference>
<dbReference type="VEuPathDB" id="HostDB:ENSMUSG00000043207"/>
<dbReference type="eggNOG" id="KOG2719">
    <property type="taxonomic scope" value="Eukaryota"/>
</dbReference>
<dbReference type="GeneTree" id="ENSGT00390000002053"/>
<dbReference type="HOGENOM" id="CLU_025947_3_0_1"/>
<dbReference type="InParanoid" id="Q80W54"/>
<dbReference type="OMA" id="FVIEEKF"/>
<dbReference type="OrthoDB" id="360839at2759"/>
<dbReference type="PhylomeDB" id="Q80W54"/>
<dbReference type="TreeFam" id="TF105972"/>
<dbReference type="BRENDA" id="3.4.24.84">
    <property type="organism ID" value="3474"/>
</dbReference>
<dbReference type="BioGRID-ORCS" id="230709">
    <property type="hits" value="3 hits in 78 CRISPR screens"/>
</dbReference>
<dbReference type="ChiTaRS" id="Zmpste24">
    <property type="organism name" value="mouse"/>
</dbReference>
<dbReference type="PRO" id="PR:Q80W54"/>
<dbReference type="Proteomes" id="UP000000589">
    <property type="component" value="Chromosome 4"/>
</dbReference>
<dbReference type="RNAct" id="Q80W54">
    <property type="molecule type" value="protein"/>
</dbReference>
<dbReference type="Bgee" id="ENSMUSG00000043207">
    <property type="expression patterns" value="Expressed in cleaving embryo and 250 other cell types or tissues"/>
</dbReference>
<dbReference type="ExpressionAtlas" id="Q80W54">
    <property type="expression patterns" value="baseline and differential"/>
</dbReference>
<dbReference type="GO" id="GO:0031901">
    <property type="term" value="C:early endosome membrane"/>
    <property type="evidence" value="ECO:0007669"/>
    <property type="project" value="UniProtKB-SubCell"/>
</dbReference>
<dbReference type="GO" id="GO:0005789">
    <property type="term" value="C:endoplasmic reticulum membrane"/>
    <property type="evidence" value="ECO:0007669"/>
    <property type="project" value="UniProtKB-SubCell"/>
</dbReference>
<dbReference type="GO" id="GO:0031902">
    <property type="term" value="C:late endosome membrane"/>
    <property type="evidence" value="ECO:0007669"/>
    <property type="project" value="UniProtKB-SubCell"/>
</dbReference>
<dbReference type="GO" id="GO:0016020">
    <property type="term" value="C:membrane"/>
    <property type="evidence" value="ECO:0000314"/>
    <property type="project" value="MGI"/>
</dbReference>
<dbReference type="GO" id="GO:0005635">
    <property type="term" value="C:nuclear envelope"/>
    <property type="evidence" value="ECO:0000314"/>
    <property type="project" value="MGI"/>
</dbReference>
<dbReference type="GO" id="GO:0005637">
    <property type="term" value="C:nuclear inner membrane"/>
    <property type="evidence" value="ECO:0007669"/>
    <property type="project" value="UniProtKB-SubCell"/>
</dbReference>
<dbReference type="GO" id="GO:0032991">
    <property type="term" value="C:protein-containing complex"/>
    <property type="evidence" value="ECO:0000266"/>
    <property type="project" value="MGI"/>
</dbReference>
<dbReference type="GO" id="GO:0003690">
    <property type="term" value="F:double-stranded DNA binding"/>
    <property type="evidence" value="ECO:0000316"/>
    <property type="project" value="MGI"/>
</dbReference>
<dbReference type="GO" id="GO:0004175">
    <property type="term" value="F:endopeptidase activity"/>
    <property type="evidence" value="ECO:0000314"/>
    <property type="project" value="MGI"/>
</dbReference>
<dbReference type="GO" id="GO:0046872">
    <property type="term" value="F:metal ion binding"/>
    <property type="evidence" value="ECO:0007669"/>
    <property type="project" value="UniProtKB-KW"/>
</dbReference>
<dbReference type="GO" id="GO:0004222">
    <property type="term" value="F:metalloendopeptidase activity"/>
    <property type="evidence" value="ECO:0000314"/>
    <property type="project" value="UniProtKB"/>
</dbReference>
<dbReference type="GO" id="GO:0007628">
    <property type="term" value="P:adult walking behavior"/>
    <property type="evidence" value="ECO:0000315"/>
    <property type="project" value="MGI"/>
</dbReference>
<dbReference type="GO" id="GO:0030282">
    <property type="term" value="P:bone mineralization"/>
    <property type="evidence" value="ECO:0000316"/>
    <property type="project" value="MGI"/>
</dbReference>
<dbReference type="GO" id="GO:0071586">
    <property type="term" value="P:CAAX-box protein processing"/>
    <property type="evidence" value="ECO:0007669"/>
    <property type="project" value="InterPro"/>
</dbReference>
<dbReference type="GO" id="GO:1990036">
    <property type="term" value="P:calcium ion import into sarcoplasmic reticulum"/>
    <property type="evidence" value="ECO:0000315"/>
    <property type="project" value="MGI"/>
</dbReference>
<dbReference type="GO" id="GO:0061762">
    <property type="term" value="P:CAMKK-AMPK signaling cascade"/>
    <property type="evidence" value="ECO:0000315"/>
    <property type="project" value="MGI"/>
</dbReference>
<dbReference type="GO" id="GO:0061337">
    <property type="term" value="P:cardiac conduction"/>
    <property type="evidence" value="ECO:0000315"/>
    <property type="project" value="MGI"/>
</dbReference>
<dbReference type="GO" id="GO:0055013">
    <property type="term" value="P:cardiac muscle cell development"/>
    <property type="evidence" value="ECO:0000315"/>
    <property type="project" value="MGI"/>
</dbReference>
<dbReference type="GO" id="GO:0003231">
    <property type="term" value="P:cardiac ventricle development"/>
    <property type="evidence" value="ECO:0000315"/>
    <property type="project" value="MGI"/>
</dbReference>
<dbReference type="GO" id="GO:0071480">
    <property type="term" value="P:cellular response to gamma radiation"/>
    <property type="evidence" value="ECO:0000315"/>
    <property type="project" value="MGI"/>
</dbReference>
<dbReference type="GO" id="GO:0006325">
    <property type="term" value="P:chromatin organization"/>
    <property type="evidence" value="ECO:0000315"/>
    <property type="project" value="MGI"/>
</dbReference>
<dbReference type="GO" id="GO:0051276">
    <property type="term" value="P:chromosome organization"/>
    <property type="evidence" value="ECO:0000315"/>
    <property type="project" value="MGI"/>
</dbReference>
<dbReference type="GO" id="GO:0008340">
    <property type="term" value="P:determination of adult lifespan"/>
    <property type="evidence" value="ECO:0000315"/>
    <property type="project" value="MGI"/>
</dbReference>
<dbReference type="GO" id="GO:0006974">
    <property type="term" value="P:DNA damage response"/>
    <property type="evidence" value="ECO:0000315"/>
    <property type="project" value="MGI"/>
</dbReference>
<dbReference type="GO" id="GO:0006281">
    <property type="term" value="P:DNA repair"/>
    <property type="evidence" value="ECO:0000315"/>
    <property type="project" value="MGI"/>
</dbReference>
<dbReference type="GO" id="GO:0008544">
    <property type="term" value="P:epidermis development"/>
    <property type="evidence" value="ECO:0000315"/>
    <property type="project" value="MGI"/>
</dbReference>
<dbReference type="GO" id="GO:0040029">
    <property type="term" value="P:epigenetic regulation of gene expression"/>
    <property type="evidence" value="ECO:0000315"/>
    <property type="project" value="MGI"/>
</dbReference>
<dbReference type="GO" id="GO:0003417">
    <property type="term" value="P:growth plate cartilage development"/>
    <property type="evidence" value="ECO:0000315"/>
    <property type="project" value="MGI"/>
</dbReference>
<dbReference type="GO" id="GO:0001942">
    <property type="term" value="P:hair follicle development"/>
    <property type="evidence" value="ECO:0000315"/>
    <property type="project" value="MGI"/>
</dbReference>
<dbReference type="GO" id="GO:0003007">
    <property type="term" value="P:heart morphogenesis"/>
    <property type="evidence" value="ECO:0000315"/>
    <property type="project" value="MGI"/>
</dbReference>
<dbReference type="GO" id="GO:0006925">
    <property type="term" value="P:inflammatory cell apoptotic process"/>
    <property type="evidence" value="ECO:0000315"/>
    <property type="project" value="MGI"/>
</dbReference>
<dbReference type="GO" id="GO:0060993">
    <property type="term" value="P:kidney morphogenesis"/>
    <property type="evidence" value="ECO:0000315"/>
    <property type="project" value="MGI"/>
</dbReference>
<dbReference type="GO" id="GO:0006629">
    <property type="term" value="P:lipid metabolic process"/>
    <property type="evidence" value="ECO:0000315"/>
    <property type="project" value="MGI"/>
</dbReference>
<dbReference type="GO" id="GO:0001889">
    <property type="term" value="P:liver development"/>
    <property type="evidence" value="ECO:0000315"/>
    <property type="project" value="MGI"/>
</dbReference>
<dbReference type="GO" id="GO:0043007">
    <property type="term" value="P:maintenance of rDNA"/>
    <property type="evidence" value="ECO:0000315"/>
    <property type="project" value="MGI"/>
</dbReference>
<dbReference type="GO" id="GO:0035264">
    <property type="term" value="P:multicellular organism growth"/>
    <property type="evidence" value="ECO:0000315"/>
    <property type="project" value="MGI"/>
</dbReference>
<dbReference type="GO" id="GO:0010629">
    <property type="term" value="P:negative regulation of gene expression"/>
    <property type="evidence" value="ECO:0000315"/>
    <property type="project" value="MGI"/>
</dbReference>
<dbReference type="GO" id="GO:1903799">
    <property type="term" value="P:negative regulation of miRNA processing"/>
    <property type="evidence" value="ECO:0000315"/>
    <property type="project" value="MGI"/>
</dbReference>
<dbReference type="GO" id="GO:0050905">
    <property type="term" value="P:neuromuscular process"/>
    <property type="evidence" value="ECO:0000315"/>
    <property type="project" value="MGI"/>
</dbReference>
<dbReference type="GO" id="GO:0006998">
    <property type="term" value="P:nuclear envelope organization"/>
    <property type="evidence" value="ECO:0000314"/>
    <property type="project" value="UniProtKB"/>
</dbReference>
<dbReference type="GO" id="GO:0006997">
    <property type="term" value="P:nucleus organization"/>
    <property type="evidence" value="ECO:0000315"/>
    <property type="project" value="MGI"/>
</dbReference>
<dbReference type="GO" id="GO:0010628">
    <property type="term" value="P:positive regulation of gene expression"/>
    <property type="evidence" value="ECO:0000315"/>
    <property type="project" value="MGI"/>
</dbReference>
<dbReference type="GO" id="GO:0044029">
    <property type="term" value="P:positive regulation of gene expression via chromosomal CpG island demethylation"/>
    <property type="evidence" value="ECO:0000315"/>
    <property type="project" value="MGI"/>
</dbReference>
<dbReference type="GO" id="GO:0030327">
    <property type="term" value="P:prenylated protein catabolic process"/>
    <property type="evidence" value="ECO:0000314"/>
    <property type="project" value="MGI"/>
</dbReference>
<dbReference type="GO" id="GO:0051604">
    <property type="term" value="P:protein maturation"/>
    <property type="evidence" value="ECO:0000314"/>
    <property type="project" value="UniProtKB"/>
</dbReference>
<dbReference type="GO" id="GO:0016485">
    <property type="term" value="P:protein processing"/>
    <property type="evidence" value="ECO:0000315"/>
    <property type="project" value="MGI"/>
</dbReference>
<dbReference type="GO" id="GO:0010506">
    <property type="term" value="P:regulation of autophagy"/>
    <property type="evidence" value="ECO:0000315"/>
    <property type="project" value="MGI"/>
</dbReference>
<dbReference type="GO" id="GO:1903522">
    <property type="term" value="P:regulation of blood circulation"/>
    <property type="evidence" value="ECO:0000315"/>
    <property type="project" value="MGI"/>
</dbReference>
<dbReference type="GO" id="GO:0030500">
    <property type="term" value="P:regulation of bone mineralization"/>
    <property type="evidence" value="ECO:0000316"/>
    <property type="project" value="MGI"/>
</dbReference>
<dbReference type="GO" id="GO:0008360">
    <property type="term" value="P:regulation of cell shape"/>
    <property type="evidence" value="ECO:0000315"/>
    <property type="project" value="MGI"/>
</dbReference>
<dbReference type="GO" id="GO:2000772">
    <property type="term" value="P:regulation of cellular senescence"/>
    <property type="evidence" value="ECO:0000315"/>
    <property type="project" value="MGI"/>
</dbReference>
<dbReference type="GO" id="GO:0050688">
    <property type="term" value="P:regulation of defense response to virus"/>
    <property type="evidence" value="ECO:0000315"/>
    <property type="project" value="MGI"/>
</dbReference>
<dbReference type="GO" id="GO:0043516">
    <property type="term" value="P:regulation of DNA damage response, signal transduction by p53 class mediator"/>
    <property type="evidence" value="ECO:0000315"/>
    <property type="project" value="MGI"/>
</dbReference>
<dbReference type="GO" id="GO:0006355">
    <property type="term" value="P:regulation of DNA-templated transcription"/>
    <property type="evidence" value="ECO:0000315"/>
    <property type="project" value="MGI"/>
</dbReference>
<dbReference type="GO" id="GO:0048145">
    <property type="term" value="P:regulation of fibroblast proliferation"/>
    <property type="evidence" value="ECO:0000315"/>
    <property type="project" value="MGI"/>
</dbReference>
<dbReference type="GO" id="GO:0010906">
    <property type="term" value="P:regulation of glucose metabolic process"/>
    <property type="evidence" value="ECO:0000315"/>
    <property type="project" value="MGI"/>
</dbReference>
<dbReference type="GO" id="GO:0008016">
    <property type="term" value="P:regulation of heart contraction"/>
    <property type="evidence" value="ECO:0000315"/>
    <property type="project" value="MGI"/>
</dbReference>
<dbReference type="GO" id="GO:0032350">
    <property type="term" value="P:regulation of hormone metabolic process"/>
    <property type="evidence" value="ECO:0000315"/>
    <property type="project" value="MGI"/>
</dbReference>
<dbReference type="GO" id="GO:0019216">
    <property type="term" value="P:regulation of lipid metabolic process"/>
    <property type="evidence" value="ECO:0000315"/>
    <property type="project" value="MGI"/>
</dbReference>
<dbReference type="GO" id="GO:0007346">
    <property type="term" value="P:regulation of mitotic cell cycle"/>
    <property type="evidence" value="ECO:0000315"/>
    <property type="project" value="MGI"/>
</dbReference>
<dbReference type="GO" id="GO:1903463">
    <property type="term" value="P:regulation of mitotic cell cycle DNA replication"/>
    <property type="evidence" value="ECO:0000315"/>
    <property type="project" value="MGI"/>
</dbReference>
<dbReference type="GO" id="GO:0040014">
    <property type="term" value="P:regulation of multicellular organism growth"/>
    <property type="evidence" value="ECO:0000316"/>
    <property type="project" value="MGI"/>
</dbReference>
<dbReference type="GO" id="GO:0070302">
    <property type="term" value="P:regulation of stress-activated protein kinase signaling cascade"/>
    <property type="evidence" value="ECO:0000315"/>
    <property type="project" value="MGI"/>
</dbReference>
<dbReference type="GO" id="GO:2000730">
    <property type="term" value="P:regulation of termination of RNA polymerase I transcription"/>
    <property type="evidence" value="ECO:0000315"/>
    <property type="project" value="MGI"/>
</dbReference>
<dbReference type="GO" id="GO:0032006">
    <property type="term" value="P:regulation of TOR signaling"/>
    <property type="evidence" value="ECO:0000315"/>
    <property type="project" value="MGI"/>
</dbReference>
<dbReference type="GO" id="GO:0060307">
    <property type="term" value="P:regulation of ventricular cardiac muscle cell membrane repolarization"/>
    <property type="evidence" value="ECO:0000315"/>
    <property type="project" value="MGI"/>
</dbReference>
<dbReference type="GO" id="GO:0072423">
    <property type="term" value="P:response to DNA damage checkpoint signaling"/>
    <property type="evidence" value="ECO:0000315"/>
    <property type="project" value="MGI"/>
</dbReference>
<dbReference type="GO" id="GO:0048538">
    <property type="term" value="P:thymus development"/>
    <property type="evidence" value="ECO:0000315"/>
    <property type="project" value="MGI"/>
</dbReference>
<dbReference type="GO" id="GO:0003229">
    <property type="term" value="P:ventricular cardiac muscle tissue development"/>
    <property type="evidence" value="ECO:0000315"/>
    <property type="project" value="MGI"/>
</dbReference>
<dbReference type="CDD" id="cd07343">
    <property type="entry name" value="M48A_Zmpste24p_like"/>
    <property type="match status" value="1"/>
</dbReference>
<dbReference type="Gene3D" id="3.30.2010.10">
    <property type="entry name" value="Metalloproteases ('zincins'), catalytic domain"/>
    <property type="match status" value="1"/>
</dbReference>
<dbReference type="InterPro" id="IPR027057">
    <property type="entry name" value="CAXX_Prtase_1"/>
</dbReference>
<dbReference type="InterPro" id="IPR001915">
    <property type="entry name" value="Peptidase_M48"/>
</dbReference>
<dbReference type="InterPro" id="IPR032456">
    <property type="entry name" value="Peptidase_M48_N"/>
</dbReference>
<dbReference type="PANTHER" id="PTHR10120">
    <property type="entry name" value="CAAX PRENYL PROTEASE 1"/>
    <property type="match status" value="1"/>
</dbReference>
<dbReference type="Pfam" id="PF01435">
    <property type="entry name" value="Peptidase_M48"/>
    <property type="match status" value="1"/>
</dbReference>
<dbReference type="Pfam" id="PF16491">
    <property type="entry name" value="Peptidase_M48_N"/>
    <property type="match status" value="1"/>
</dbReference>
<organism>
    <name type="scientific">Mus musculus</name>
    <name type="common">Mouse</name>
    <dbReference type="NCBI Taxonomy" id="10090"/>
    <lineage>
        <taxon>Eukaryota</taxon>
        <taxon>Metazoa</taxon>
        <taxon>Chordata</taxon>
        <taxon>Craniata</taxon>
        <taxon>Vertebrata</taxon>
        <taxon>Euteleostomi</taxon>
        <taxon>Mammalia</taxon>
        <taxon>Eutheria</taxon>
        <taxon>Euarchontoglires</taxon>
        <taxon>Glires</taxon>
        <taxon>Rodentia</taxon>
        <taxon>Myomorpha</taxon>
        <taxon>Muroidea</taxon>
        <taxon>Muridae</taxon>
        <taxon>Murinae</taxon>
        <taxon>Mus</taxon>
        <taxon>Mus</taxon>
    </lineage>
</organism>
<sequence>MGMWASVDAMWDFPAEKRIFGAVLLFSWTVYLWETFLAQRQRRIYKTTTRVPAELEQIMDSDTFEKSRLYQLDKSTFSFWSGLYSEVEGTFILLFGGIPYLWRLSGQFCSSAGFGPEYEIIQSLVFLLLATLFSALTGLPWSLYNTFVIEEKHGFNHQTLEFFMKDAIKKFIVTQCILLPVSALLLYIIKIGGDYFFIYAWLFTLVVSLVLVTIYADYIAPLFDKFTPLPEGKLKQEIEVMAKSIDFPLTKVYVVEGSKRSSHSNAYFYGFFKNKRIVLFDTLLEEYSVPNKDNQEESGMEARNEGEGDSEEVKAKVKNKKQGCKNEEVLAVLGHELGHWKLGHTVKNIIISQMNSFLCFFLFAVLIGRRELFAAFGFYDSQPTLIGLLIIFQFIFSPYNEVLSFCLTVLSRRFEFQADAFAKKLGKAKDLYSALIKLNKDNLGFPVSDWLFSTWHYSHPPLLERLQALKNAKQD</sequence>
<feature type="chain" id="PRO_0000138845" description="CAAX prenyl protease 1 homolog">
    <location>
        <begin position="1"/>
        <end position="475"/>
    </location>
</feature>
<feature type="topological domain" description="Lumenal" evidence="2">
    <location>
        <begin position="1"/>
        <end position="18"/>
    </location>
</feature>
<feature type="transmembrane region" description="Helical" evidence="2">
    <location>
        <begin position="19"/>
        <end position="39"/>
    </location>
</feature>
<feature type="topological domain" description="Nuclear" evidence="2">
    <location>
        <begin position="40"/>
        <end position="81"/>
    </location>
</feature>
<feature type="transmembrane region" description="Helical" evidence="2">
    <location>
        <begin position="82"/>
        <end position="102"/>
    </location>
</feature>
<feature type="topological domain" description="Lumenal" evidence="2">
    <location>
        <begin position="103"/>
        <end position="123"/>
    </location>
</feature>
<feature type="transmembrane region" description="Helical" evidence="2">
    <location>
        <begin position="124"/>
        <end position="144"/>
    </location>
</feature>
<feature type="topological domain" description="Nuclear" evidence="2">
    <location>
        <begin position="145"/>
        <end position="170"/>
    </location>
</feature>
<feature type="transmembrane region" description="Helical" evidence="2">
    <location>
        <begin position="171"/>
        <end position="191"/>
    </location>
</feature>
<feature type="topological domain" description="Lumenal" evidence="2">
    <location>
        <begin position="192"/>
        <end position="195"/>
    </location>
</feature>
<feature type="transmembrane region" description="Helical" evidence="2">
    <location>
        <begin position="196"/>
        <end position="216"/>
    </location>
</feature>
<feature type="topological domain" description="Nuclear" evidence="2">
    <location>
        <begin position="217"/>
        <end position="347"/>
    </location>
</feature>
<feature type="transmembrane region" description="Helical" evidence="2">
    <location>
        <begin position="348"/>
        <end position="368"/>
    </location>
</feature>
<feature type="topological domain" description="Lumenal" evidence="2">
    <location>
        <begin position="369"/>
        <end position="382"/>
    </location>
</feature>
<feature type="transmembrane region" description="Helical" evidence="2">
    <location>
        <begin position="383"/>
        <end position="405"/>
    </location>
</feature>
<feature type="topological domain" description="Nuclear" evidence="2">
    <location>
        <begin position="406"/>
        <end position="475"/>
    </location>
</feature>
<feature type="region of interest" description="Disordered" evidence="3">
    <location>
        <begin position="293"/>
        <end position="314"/>
    </location>
</feature>
<feature type="compositionally biased region" description="Basic and acidic residues" evidence="3">
    <location>
        <begin position="300"/>
        <end position="314"/>
    </location>
</feature>
<feature type="active site" evidence="1">
    <location>
        <position position="336"/>
    </location>
</feature>
<feature type="binding site" evidence="1">
    <location>
        <position position="335"/>
    </location>
    <ligand>
        <name>Zn(2+)</name>
        <dbReference type="ChEBI" id="CHEBI:29105"/>
        <note>catalytic</note>
    </ligand>
</feature>
<feature type="binding site" evidence="1">
    <location>
        <position position="339"/>
    </location>
    <ligand>
        <name>Zn(2+)</name>
        <dbReference type="ChEBI" id="CHEBI:29105"/>
        <note>catalytic</note>
    </ligand>
</feature>
<feature type="binding site" evidence="1">
    <location>
        <position position="415"/>
    </location>
    <ligand>
        <name>Zn(2+)</name>
        <dbReference type="ChEBI" id="CHEBI:29105"/>
        <note>catalytic</note>
    </ligand>
</feature>
<feature type="sequence conflict" description="In Ref. 2; CAD31792." evidence="12" ref="2">
    <original>A</original>
    <variation>S</variation>
    <location>
        <position position="53"/>
    </location>
</feature>
<feature type="sequence conflict" description="In Ref. 1; AAK38172." evidence="12" ref="1">
    <original>H</original>
    <variation>Q</variation>
    <location>
        <position position="153"/>
    </location>
</feature>
<feature type="sequence conflict" description="In Ref. 1; AAK38172." evidence="12" ref="1">
    <original>H</original>
    <variation>Q</variation>
    <location>
        <position position="157"/>
    </location>
</feature>
<name>FACE1_MOUSE</name>
<evidence type="ECO:0000250" key="1">
    <source>
        <dbReference type="UniProtKB" id="O75844"/>
    </source>
</evidence>
<evidence type="ECO:0000255" key="2"/>
<evidence type="ECO:0000256" key="3">
    <source>
        <dbReference type="SAM" id="MobiDB-lite"/>
    </source>
</evidence>
<evidence type="ECO:0000269" key="4">
    <source>
    </source>
</evidence>
<evidence type="ECO:0000269" key="5">
    <source>
    </source>
</evidence>
<evidence type="ECO:0000269" key="6">
    <source>
    </source>
</evidence>
<evidence type="ECO:0000269" key="7">
    <source>
    </source>
</evidence>
<evidence type="ECO:0000269" key="8">
    <source>
    </source>
</evidence>
<evidence type="ECO:0000269" key="9">
    <source>
    </source>
</evidence>
<evidence type="ECO:0000303" key="10">
    <source>
    </source>
</evidence>
<evidence type="ECO:0000303" key="11">
    <source>
    </source>
</evidence>
<evidence type="ECO:0000305" key="12"/>
<evidence type="ECO:0000305" key="13">
    <source>
    </source>
</evidence>
<evidence type="ECO:0000305" key="14">
    <source>
    </source>
</evidence>
<evidence type="ECO:0000312" key="15">
    <source>
        <dbReference type="MGI" id="MGI:1890508"/>
    </source>
</evidence>
<gene>
    <name evidence="10 15" type="primary">Zmpste24</name>
    <name evidence="11" type="synonym">Face1</name>
</gene>
<comment type="function">
    <text evidence="4 5 6 7 8 9">Transmembrane metalloprotease whose catalytic activity is critical for processing lamin A/LMNA on the inner nuclear membrane and clearing clogged translocons on the endoplasmic reticulum (PubMed:11923874, PubMed:12235369, PubMed:17652517, PubMed:27462105). Proteolytically removes the C-terminal three residues of farnesylated proteins (PubMed:11399759, PubMed:17652517). Also plays an antiviral role independently of its protease activity by restricting enveloped RNA and DNA viruses (PubMed:28246125). Mechanistically, controls IFITM antiviral pathway to hinder viruses from breaching the endosomal barrier by modulating membrane fluidity (PubMed:28246125).</text>
</comment>
<comment type="catalytic activity">
    <reaction evidence="13 14">
        <text>Hydrolyzes the peptide bond -P2-(S-farnesyl or geranylgeranyl)C-P1'-P2'-P3'-COOH where P1' and P2' are amino acids with aliphatic side chains and P3' is any C-terminal residue.</text>
        <dbReference type="EC" id="3.4.24.84"/>
    </reaction>
</comment>
<comment type="cofactor">
    <cofactor evidence="1">
        <name>Zn(2+)</name>
        <dbReference type="ChEBI" id="CHEBI:29105"/>
    </cofactor>
    <text evidence="1">Binds 1 zinc ion per subunit.</text>
</comment>
<comment type="activity regulation">
    <text evidence="7 8">Inhibited by HIV protease inhibitors, such as lopinavir, tipranavir and nelfinavir, leading to defects in lamin A/LMNA maturation and accumulation of prelamin-A/C precursors in cells (PubMed:17652517, PubMed:27462105). This causes defects in nuclear envelope integrity and release of DNA in the cytosol, activating the AIM2 inflammasome (PubMed:27462105).</text>
</comment>
<comment type="subcellular location">
    <subcellularLocation>
        <location evidence="1">Endoplasmic reticulum membrane</location>
        <topology evidence="2">Multi-pass membrane protein</topology>
    </subcellularLocation>
    <subcellularLocation>
        <location evidence="1">Nucleus inner membrane</location>
        <topology evidence="2">Multi-pass membrane protein</topology>
    </subcellularLocation>
    <subcellularLocation>
        <location evidence="1">Early endosome membrane</location>
        <topology evidence="2">Multi-pass membrane protein</topology>
    </subcellularLocation>
    <subcellularLocation>
        <location evidence="1">Late endosome membrane</location>
        <topology evidence="2">Multi-pass membrane protein</topology>
    </subcellularLocation>
</comment>
<comment type="domain">
    <text evidence="1">The metalloprotease domain is constituted by the two C-terminal nuclear regions.</text>
</comment>
<comment type="disruption phenotype">
    <text evidence="5 6 9">Severe growth retardation and premature death (PubMed:11923874). Mice gain weight slowly, appear malnourished and exhibit progressive hair loss (PubMed:12235369). Mice suffer from dilated cardiomyopathy, muscular dystrophy and lipodystrophy due to defects in lamin A/LMNA maturation (PubMed:11923874). Mice also show spontaneous bone fractures and muscle weakness due to defects in lamin A/LMNA maturation (PubMed:12235369). Mutant mice show increased viral protein expression, enhanced viral reporter activity, and higher titers of infectious viral particles (PubMed:28246125).</text>
</comment>
<comment type="similarity">
    <text evidence="12">Belongs to the peptidase M48A family.</text>
</comment>
<keyword id="KW-0930">Antiviral protein</keyword>
<keyword id="KW-0256">Endoplasmic reticulum</keyword>
<keyword id="KW-0967">Endosome</keyword>
<keyword id="KW-0378">Hydrolase</keyword>
<keyword id="KW-0472">Membrane</keyword>
<keyword id="KW-0479">Metal-binding</keyword>
<keyword id="KW-0482">Metalloprotease</keyword>
<keyword id="KW-0539">Nucleus</keyword>
<keyword id="KW-0645">Protease</keyword>
<keyword id="KW-1185">Reference proteome</keyword>
<keyword id="KW-0812">Transmembrane</keyword>
<keyword id="KW-1133">Transmembrane helix</keyword>
<keyword id="KW-0862">Zinc</keyword>
<accession>Q80W54</accession>
<accession>Q8BJK4</accession>
<accession>Q8K569</accession>
<protein>
    <recommendedName>
        <fullName evidence="12">CAAX prenyl protease 1 homolog</fullName>
        <ecNumber evidence="13 14">3.4.24.84</ecNumber>
    </recommendedName>
    <alternativeName>
        <fullName evidence="11">Farnesylated proteins-converting enzyme 1</fullName>
        <shortName evidence="11">FACE-1</shortName>
    </alternativeName>
    <alternativeName>
        <fullName evidence="1">Prenyl protein-specific endoprotease 1</fullName>
    </alternativeName>
    <alternativeName>
        <fullName evidence="10">Zinc metalloproteinase Ste24 homolog</fullName>
    </alternativeName>
</protein>
<reference key="1">
    <citation type="journal article" date="2001" name="J. Biol. Chem.">
        <title>Biochemical studies of Zmpste24-deficient mice.</title>
        <authorList>
            <person name="Leung G.K."/>
            <person name="Schmidt W.K."/>
            <person name="Bergo M.O."/>
            <person name="Gavino B."/>
            <person name="Wong D.H."/>
            <person name="Tam A."/>
            <person name="Ashby M.N."/>
            <person name="Michaelis S."/>
            <person name="Young S.G."/>
        </authorList>
    </citation>
    <scope>NUCLEOTIDE SEQUENCE [MRNA]</scope>
    <scope>FUNCTION</scope>
    <scope>CATALYTIC ACTIVITY</scope>
</reference>
<reference key="2">
    <citation type="journal article" date="2002" name="Nat. Genet.">
        <title>Defective prelamin A processing and muscular and adipocyte alterations in Zmpste24 metalloproteinase deficient mice.</title>
        <authorList>
            <person name="Pendas A.M."/>
            <person name="Zhou Z."/>
            <person name="Cadinanos J."/>
            <person name="Freije J.M.P."/>
            <person name="Wang J."/>
            <person name="Hultenby K."/>
            <person name="Astudillo A."/>
            <person name="Wernerson A."/>
            <person name="Rodriguez F."/>
            <person name="Triggvason K."/>
            <person name="Lopez-Otin C."/>
        </authorList>
    </citation>
    <scope>NUCLEOTIDE SEQUENCE [MRNA]</scope>
    <scope>FUNCTION IN LAMIN A/C PROCESSING</scope>
    <scope>DISRUPTION PHENOTYPE</scope>
    <source>
        <strain>C57BL/6J</strain>
    </source>
</reference>
<reference key="3">
    <citation type="journal article" date="2005" name="Science">
        <title>The transcriptional landscape of the mammalian genome.</title>
        <authorList>
            <person name="Carninci P."/>
            <person name="Kasukawa T."/>
            <person name="Katayama S."/>
            <person name="Gough J."/>
            <person name="Frith M.C."/>
            <person name="Maeda N."/>
            <person name="Oyama R."/>
            <person name="Ravasi T."/>
            <person name="Lenhard B."/>
            <person name="Wells C."/>
            <person name="Kodzius R."/>
            <person name="Shimokawa K."/>
            <person name="Bajic V.B."/>
            <person name="Brenner S.E."/>
            <person name="Batalov S."/>
            <person name="Forrest A.R."/>
            <person name="Zavolan M."/>
            <person name="Davis M.J."/>
            <person name="Wilming L.G."/>
            <person name="Aidinis V."/>
            <person name="Allen J.E."/>
            <person name="Ambesi-Impiombato A."/>
            <person name="Apweiler R."/>
            <person name="Aturaliya R.N."/>
            <person name="Bailey T.L."/>
            <person name="Bansal M."/>
            <person name="Baxter L."/>
            <person name="Beisel K.W."/>
            <person name="Bersano T."/>
            <person name="Bono H."/>
            <person name="Chalk A.M."/>
            <person name="Chiu K.P."/>
            <person name="Choudhary V."/>
            <person name="Christoffels A."/>
            <person name="Clutterbuck D.R."/>
            <person name="Crowe M.L."/>
            <person name="Dalla E."/>
            <person name="Dalrymple B.P."/>
            <person name="de Bono B."/>
            <person name="Della Gatta G."/>
            <person name="di Bernardo D."/>
            <person name="Down T."/>
            <person name="Engstrom P."/>
            <person name="Fagiolini M."/>
            <person name="Faulkner G."/>
            <person name="Fletcher C.F."/>
            <person name="Fukushima T."/>
            <person name="Furuno M."/>
            <person name="Futaki S."/>
            <person name="Gariboldi M."/>
            <person name="Georgii-Hemming P."/>
            <person name="Gingeras T.R."/>
            <person name="Gojobori T."/>
            <person name="Green R.E."/>
            <person name="Gustincich S."/>
            <person name="Harbers M."/>
            <person name="Hayashi Y."/>
            <person name="Hensch T.K."/>
            <person name="Hirokawa N."/>
            <person name="Hill D."/>
            <person name="Huminiecki L."/>
            <person name="Iacono M."/>
            <person name="Ikeo K."/>
            <person name="Iwama A."/>
            <person name="Ishikawa T."/>
            <person name="Jakt M."/>
            <person name="Kanapin A."/>
            <person name="Katoh M."/>
            <person name="Kawasawa Y."/>
            <person name="Kelso J."/>
            <person name="Kitamura H."/>
            <person name="Kitano H."/>
            <person name="Kollias G."/>
            <person name="Krishnan S.P."/>
            <person name="Kruger A."/>
            <person name="Kummerfeld S.K."/>
            <person name="Kurochkin I.V."/>
            <person name="Lareau L.F."/>
            <person name="Lazarevic D."/>
            <person name="Lipovich L."/>
            <person name="Liu J."/>
            <person name="Liuni S."/>
            <person name="McWilliam S."/>
            <person name="Madan Babu M."/>
            <person name="Madera M."/>
            <person name="Marchionni L."/>
            <person name="Matsuda H."/>
            <person name="Matsuzawa S."/>
            <person name="Miki H."/>
            <person name="Mignone F."/>
            <person name="Miyake S."/>
            <person name="Morris K."/>
            <person name="Mottagui-Tabar S."/>
            <person name="Mulder N."/>
            <person name="Nakano N."/>
            <person name="Nakauchi H."/>
            <person name="Ng P."/>
            <person name="Nilsson R."/>
            <person name="Nishiguchi S."/>
            <person name="Nishikawa S."/>
            <person name="Nori F."/>
            <person name="Ohara O."/>
            <person name="Okazaki Y."/>
            <person name="Orlando V."/>
            <person name="Pang K.C."/>
            <person name="Pavan W.J."/>
            <person name="Pavesi G."/>
            <person name="Pesole G."/>
            <person name="Petrovsky N."/>
            <person name="Piazza S."/>
            <person name="Reed J."/>
            <person name="Reid J.F."/>
            <person name="Ring B.Z."/>
            <person name="Ringwald M."/>
            <person name="Rost B."/>
            <person name="Ruan Y."/>
            <person name="Salzberg S.L."/>
            <person name="Sandelin A."/>
            <person name="Schneider C."/>
            <person name="Schoenbach C."/>
            <person name="Sekiguchi K."/>
            <person name="Semple C.A."/>
            <person name="Seno S."/>
            <person name="Sessa L."/>
            <person name="Sheng Y."/>
            <person name="Shibata Y."/>
            <person name="Shimada H."/>
            <person name="Shimada K."/>
            <person name="Silva D."/>
            <person name="Sinclair B."/>
            <person name="Sperling S."/>
            <person name="Stupka E."/>
            <person name="Sugiura K."/>
            <person name="Sultana R."/>
            <person name="Takenaka Y."/>
            <person name="Taki K."/>
            <person name="Tammoja K."/>
            <person name="Tan S.L."/>
            <person name="Tang S."/>
            <person name="Taylor M.S."/>
            <person name="Tegner J."/>
            <person name="Teichmann S.A."/>
            <person name="Ueda H.R."/>
            <person name="van Nimwegen E."/>
            <person name="Verardo R."/>
            <person name="Wei C.L."/>
            <person name="Yagi K."/>
            <person name="Yamanishi H."/>
            <person name="Zabarovsky E."/>
            <person name="Zhu S."/>
            <person name="Zimmer A."/>
            <person name="Hide W."/>
            <person name="Bult C."/>
            <person name="Grimmond S.M."/>
            <person name="Teasdale R.D."/>
            <person name="Liu E.T."/>
            <person name="Brusic V."/>
            <person name="Quackenbush J."/>
            <person name="Wahlestedt C."/>
            <person name="Mattick J.S."/>
            <person name="Hume D.A."/>
            <person name="Kai C."/>
            <person name="Sasaki D."/>
            <person name="Tomaru Y."/>
            <person name="Fukuda S."/>
            <person name="Kanamori-Katayama M."/>
            <person name="Suzuki M."/>
            <person name="Aoki J."/>
            <person name="Arakawa T."/>
            <person name="Iida J."/>
            <person name="Imamura K."/>
            <person name="Itoh M."/>
            <person name="Kato T."/>
            <person name="Kawaji H."/>
            <person name="Kawagashira N."/>
            <person name="Kawashima T."/>
            <person name="Kojima M."/>
            <person name="Kondo S."/>
            <person name="Konno H."/>
            <person name="Nakano K."/>
            <person name="Ninomiya N."/>
            <person name="Nishio T."/>
            <person name="Okada M."/>
            <person name="Plessy C."/>
            <person name="Shibata K."/>
            <person name="Shiraki T."/>
            <person name="Suzuki S."/>
            <person name="Tagami M."/>
            <person name="Waki K."/>
            <person name="Watahiki A."/>
            <person name="Okamura-Oho Y."/>
            <person name="Suzuki H."/>
            <person name="Kawai J."/>
            <person name="Hayashizaki Y."/>
        </authorList>
    </citation>
    <scope>NUCLEOTIDE SEQUENCE [LARGE SCALE MRNA]</scope>
    <source>
        <strain>C57BL/6J</strain>
    </source>
</reference>
<reference key="4">
    <citation type="journal article" date="2002" name="Proc. Natl. Acad. Sci. U.S.A.">
        <title>Zmpste24 deficiency in mice causes spontaneous bone fractures, muscle weakness, and a prelamin A processing defect.</title>
        <authorList>
            <person name="Bergo M.O."/>
            <person name="Gavino B."/>
            <person name="Ross J."/>
            <person name="Schmidt W.K."/>
            <person name="Hong C."/>
            <person name="Kendall L.V."/>
            <person name="Mohr A."/>
            <person name="Meta M."/>
            <person name="Genant H."/>
            <person name="Jiang Y."/>
            <person name="Wisner E.R."/>
            <person name="Van Bruggen N."/>
            <person name="Carano R.A."/>
            <person name="Michaelis S."/>
            <person name="Griffey S.M."/>
            <person name="Young S.G."/>
        </authorList>
    </citation>
    <scope>FUNCTION</scope>
    <scope>DISRUPTION PHENOTYPE</scope>
</reference>
<reference key="5">
    <citation type="journal article" date="2007" name="Proc. Natl. Acad. Sci. U.S.A.">
        <title>HIV protease inhibitors block the zinc metalloproteinase ZMPSTE24 and lead to an accumulation of prelamin A in cells.</title>
        <authorList>
            <person name="Coffinier C."/>
            <person name="Hudon S.E."/>
            <person name="Farber E.A."/>
            <person name="Chang S.Y."/>
            <person name="Hrycyna C.A."/>
            <person name="Young S.G."/>
            <person name="Fong L.G."/>
        </authorList>
    </citation>
    <scope>FUNCTION</scope>
    <scope>CATALYTIC ACTIVITY</scope>
    <scope>ACTIVITY REGULATION</scope>
</reference>
<reference key="6">
    <citation type="journal article" date="2010" name="Cell">
        <title>A tissue-specific atlas of mouse protein phosphorylation and expression.</title>
        <authorList>
            <person name="Huttlin E.L."/>
            <person name="Jedrychowski M.P."/>
            <person name="Elias J.E."/>
            <person name="Goswami T."/>
            <person name="Rad R."/>
            <person name="Beausoleil S.A."/>
            <person name="Villen J."/>
            <person name="Haas W."/>
            <person name="Sowa M.E."/>
            <person name="Gygi S.P."/>
        </authorList>
    </citation>
    <scope>IDENTIFICATION BY MASS SPECTROMETRY [LARGE SCALE ANALYSIS]</scope>
    <source>
        <tissue>Heart</tissue>
        <tissue>Kidney</tissue>
        <tissue>Liver</tissue>
        <tissue>Lung</tissue>
        <tissue>Pancreas</tissue>
        <tissue>Spleen</tissue>
    </source>
</reference>
<reference key="7">
    <citation type="journal article" date="2016" name="Proc. Natl. Acad. Sci. U.S.A.">
        <title>AIM2 inflammasome is activated by pharmacological disruption of nuclear envelope integrity.</title>
        <authorList>
            <person name="Di Micco A."/>
            <person name="Frera G."/>
            <person name="Lugrin J."/>
            <person name="Jamilloux Y."/>
            <person name="Hsu E.T."/>
            <person name="Tardivel A."/>
            <person name="De Gassart A."/>
            <person name="Zaffalon L."/>
            <person name="Bujisic B."/>
            <person name="Siegert S."/>
            <person name="Quadroni M."/>
            <person name="Broz P."/>
            <person name="Henry T."/>
            <person name="Hrycyna C.A."/>
            <person name="Martinon F."/>
        </authorList>
    </citation>
    <scope>FUNCTION</scope>
    <scope>ACTIVITY REGULATION</scope>
</reference>
<reference key="8">
    <citation type="journal article" date="2017" name="J. Exp. Med.">
        <title>ZMPSTE24 defends against influenza and other pathogenic viruses.</title>
        <authorList>
            <person name="Fu B."/>
            <person name="Wang L."/>
            <person name="Li S."/>
            <person name="Dorf M.E."/>
        </authorList>
    </citation>
    <scope>FUNCTION</scope>
    <scope>DISRUPTION PHENOTYPE</scope>
</reference>
<proteinExistence type="evidence at protein level"/>